<sequence>MLIHPQFDPVALELGPLAIHWYGLTYLVAFGLFLWLASLRVQHSPFRETGWTRRDVEDLLFYGVLGVIIGGRLGYVLFYKPGYYAAHPLEVFEVWKGGMAFHGGLLGVIGAMALFARTRGRRWLEVTDLIAPCVPTGLASGRIGNFINGELWGRAADPSLPWAMVYPQSGSEIPRHPSPLYQFALEGLLLFVVLWLYARKPRATGQVSGAFLVGYGVLRFIAEYFREPDGFLGLLALGMSMGQWLCVPMVAAGVALWVWAGRRA</sequence>
<name>LGT_METPP</name>
<keyword id="KW-0997">Cell inner membrane</keyword>
<keyword id="KW-1003">Cell membrane</keyword>
<keyword id="KW-0472">Membrane</keyword>
<keyword id="KW-1185">Reference proteome</keyword>
<keyword id="KW-0808">Transferase</keyword>
<keyword id="KW-0812">Transmembrane</keyword>
<keyword id="KW-1133">Transmembrane helix</keyword>
<accession>A2SFL2</accession>
<comment type="function">
    <text evidence="1">Catalyzes the transfer of the diacylglyceryl group from phosphatidylglycerol to the sulfhydryl group of the N-terminal cysteine of a prolipoprotein, the first step in the formation of mature lipoproteins.</text>
</comment>
<comment type="catalytic activity">
    <reaction evidence="1">
        <text>L-cysteinyl-[prolipoprotein] + a 1,2-diacyl-sn-glycero-3-phospho-(1'-sn-glycerol) = an S-1,2-diacyl-sn-glyceryl-L-cysteinyl-[prolipoprotein] + sn-glycerol 1-phosphate + H(+)</text>
        <dbReference type="Rhea" id="RHEA:56712"/>
        <dbReference type="Rhea" id="RHEA-COMP:14679"/>
        <dbReference type="Rhea" id="RHEA-COMP:14680"/>
        <dbReference type="ChEBI" id="CHEBI:15378"/>
        <dbReference type="ChEBI" id="CHEBI:29950"/>
        <dbReference type="ChEBI" id="CHEBI:57685"/>
        <dbReference type="ChEBI" id="CHEBI:64716"/>
        <dbReference type="ChEBI" id="CHEBI:140658"/>
        <dbReference type="EC" id="2.5.1.145"/>
    </reaction>
</comment>
<comment type="pathway">
    <text evidence="1">Protein modification; lipoprotein biosynthesis (diacylglyceryl transfer).</text>
</comment>
<comment type="subcellular location">
    <subcellularLocation>
        <location evidence="1">Cell inner membrane</location>
        <topology evidence="1">Multi-pass membrane protein</topology>
    </subcellularLocation>
</comment>
<comment type="similarity">
    <text evidence="1">Belongs to the Lgt family.</text>
</comment>
<proteinExistence type="inferred from homology"/>
<reference key="1">
    <citation type="journal article" date="2007" name="J. Bacteriol.">
        <title>Whole-genome analysis of the methyl tert-butyl ether-degrading beta-proteobacterium Methylibium petroleiphilum PM1.</title>
        <authorList>
            <person name="Kane S.R."/>
            <person name="Chakicherla A.Y."/>
            <person name="Chain P.S.G."/>
            <person name="Schmidt R."/>
            <person name="Shin M.W."/>
            <person name="Legler T.C."/>
            <person name="Scow K.M."/>
            <person name="Larimer F.W."/>
            <person name="Lucas S.M."/>
            <person name="Richardson P.M."/>
            <person name="Hristova K.R."/>
        </authorList>
    </citation>
    <scope>NUCLEOTIDE SEQUENCE [LARGE SCALE GENOMIC DNA]</scope>
    <source>
        <strain>ATCC BAA-1232 / LMG 22953 / PM1</strain>
    </source>
</reference>
<gene>
    <name evidence="1" type="primary">lgt</name>
    <name type="ordered locus">Mpe_A1389</name>
</gene>
<organism>
    <name type="scientific">Methylibium petroleiphilum (strain ATCC BAA-1232 / LMG 22953 / PM1)</name>
    <dbReference type="NCBI Taxonomy" id="420662"/>
    <lineage>
        <taxon>Bacteria</taxon>
        <taxon>Pseudomonadati</taxon>
        <taxon>Pseudomonadota</taxon>
        <taxon>Betaproteobacteria</taxon>
        <taxon>Burkholderiales</taxon>
        <taxon>Sphaerotilaceae</taxon>
        <taxon>Methylibium</taxon>
    </lineage>
</organism>
<protein>
    <recommendedName>
        <fullName evidence="1">Phosphatidylglycerol--prolipoprotein diacylglyceryl transferase</fullName>
        <ecNumber evidence="1">2.5.1.145</ecNumber>
    </recommendedName>
</protein>
<dbReference type="EC" id="2.5.1.145" evidence="1"/>
<dbReference type="EMBL" id="CP000555">
    <property type="protein sequence ID" value="ABM94351.1"/>
    <property type="molecule type" value="Genomic_DNA"/>
</dbReference>
<dbReference type="RefSeq" id="WP_011828988.1">
    <property type="nucleotide sequence ID" value="NC_008825.1"/>
</dbReference>
<dbReference type="SMR" id="A2SFL2"/>
<dbReference type="STRING" id="420662.Mpe_A1389"/>
<dbReference type="KEGG" id="mpt:Mpe_A1389"/>
<dbReference type="eggNOG" id="COG0682">
    <property type="taxonomic scope" value="Bacteria"/>
</dbReference>
<dbReference type="HOGENOM" id="CLU_013386_1_0_4"/>
<dbReference type="UniPathway" id="UPA00664"/>
<dbReference type="Proteomes" id="UP000000366">
    <property type="component" value="Chromosome"/>
</dbReference>
<dbReference type="GO" id="GO:0005886">
    <property type="term" value="C:plasma membrane"/>
    <property type="evidence" value="ECO:0007669"/>
    <property type="project" value="UniProtKB-SubCell"/>
</dbReference>
<dbReference type="GO" id="GO:0008961">
    <property type="term" value="F:phosphatidylglycerol-prolipoprotein diacylglyceryl transferase activity"/>
    <property type="evidence" value="ECO:0007669"/>
    <property type="project" value="UniProtKB-UniRule"/>
</dbReference>
<dbReference type="GO" id="GO:0042158">
    <property type="term" value="P:lipoprotein biosynthetic process"/>
    <property type="evidence" value="ECO:0007669"/>
    <property type="project" value="UniProtKB-UniRule"/>
</dbReference>
<dbReference type="HAMAP" id="MF_01147">
    <property type="entry name" value="Lgt"/>
    <property type="match status" value="1"/>
</dbReference>
<dbReference type="InterPro" id="IPR001640">
    <property type="entry name" value="Lgt"/>
</dbReference>
<dbReference type="NCBIfam" id="TIGR00544">
    <property type="entry name" value="lgt"/>
    <property type="match status" value="1"/>
</dbReference>
<dbReference type="PANTHER" id="PTHR30589:SF0">
    <property type="entry name" value="PHOSPHATIDYLGLYCEROL--PROLIPOPROTEIN DIACYLGLYCERYL TRANSFERASE"/>
    <property type="match status" value="1"/>
</dbReference>
<dbReference type="PANTHER" id="PTHR30589">
    <property type="entry name" value="PROLIPOPROTEIN DIACYLGLYCERYL TRANSFERASE"/>
    <property type="match status" value="1"/>
</dbReference>
<dbReference type="Pfam" id="PF01790">
    <property type="entry name" value="LGT"/>
    <property type="match status" value="1"/>
</dbReference>
<dbReference type="PROSITE" id="PS01311">
    <property type="entry name" value="LGT"/>
    <property type="match status" value="1"/>
</dbReference>
<evidence type="ECO:0000255" key="1">
    <source>
        <dbReference type="HAMAP-Rule" id="MF_01147"/>
    </source>
</evidence>
<feature type="chain" id="PRO_1000053453" description="Phosphatidylglycerol--prolipoprotein diacylglyceryl transferase">
    <location>
        <begin position="1"/>
        <end position="264"/>
    </location>
</feature>
<feature type="transmembrane region" description="Helical" evidence="1">
    <location>
        <begin position="17"/>
        <end position="37"/>
    </location>
</feature>
<feature type="transmembrane region" description="Helical" evidence="1">
    <location>
        <begin position="59"/>
        <end position="79"/>
    </location>
</feature>
<feature type="transmembrane region" description="Helical" evidence="1">
    <location>
        <begin position="95"/>
        <end position="115"/>
    </location>
</feature>
<feature type="transmembrane region" description="Helical" evidence="1">
    <location>
        <begin position="205"/>
        <end position="225"/>
    </location>
</feature>
<feature type="transmembrane region" description="Helical" evidence="1">
    <location>
        <begin position="241"/>
        <end position="261"/>
    </location>
</feature>
<feature type="binding site" evidence="1">
    <location>
        <position position="142"/>
    </location>
    <ligand>
        <name>a 1,2-diacyl-sn-glycero-3-phospho-(1'-sn-glycerol)</name>
        <dbReference type="ChEBI" id="CHEBI:64716"/>
    </ligand>
</feature>